<accession>C9X4K8</accession>
<name>SCNAA_TITDI</name>
<dbReference type="EMBL" id="FN392286">
    <property type="protein sequence ID" value="CAY61946.1"/>
    <property type="molecule type" value="mRNA"/>
</dbReference>
<dbReference type="SMR" id="C9X4K8"/>
<dbReference type="GO" id="GO:0005576">
    <property type="term" value="C:extracellular region"/>
    <property type="evidence" value="ECO:0007669"/>
    <property type="project" value="UniProtKB-SubCell"/>
</dbReference>
<dbReference type="GO" id="GO:0019871">
    <property type="term" value="F:sodium channel inhibitor activity"/>
    <property type="evidence" value="ECO:0007669"/>
    <property type="project" value="InterPro"/>
</dbReference>
<dbReference type="GO" id="GO:0090729">
    <property type="term" value="F:toxin activity"/>
    <property type="evidence" value="ECO:0007669"/>
    <property type="project" value="UniProtKB-KW"/>
</dbReference>
<dbReference type="CDD" id="cd23106">
    <property type="entry name" value="neurotoxins_LC_scorpion"/>
    <property type="match status" value="1"/>
</dbReference>
<dbReference type="Gene3D" id="3.30.30.10">
    <property type="entry name" value="Knottin, scorpion toxin-like"/>
    <property type="match status" value="1"/>
</dbReference>
<dbReference type="InterPro" id="IPR044062">
    <property type="entry name" value="LCN-type_CS_alpha_beta_dom"/>
</dbReference>
<dbReference type="InterPro" id="IPR036574">
    <property type="entry name" value="Scorpion_toxin-like_sf"/>
</dbReference>
<dbReference type="InterPro" id="IPR002061">
    <property type="entry name" value="Scorpion_toxinL/defensin"/>
</dbReference>
<dbReference type="Pfam" id="PF00537">
    <property type="entry name" value="Toxin_3"/>
    <property type="match status" value="1"/>
</dbReference>
<dbReference type="SUPFAM" id="SSF57095">
    <property type="entry name" value="Scorpion toxin-like"/>
    <property type="match status" value="1"/>
</dbReference>
<dbReference type="PROSITE" id="PS51863">
    <property type="entry name" value="LCN_CSAB"/>
    <property type="match status" value="1"/>
</dbReference>
<feature type="signal peptide" evidence="1">
    <location>
        <begin position="1"/>
        <end position="20"/>
    </location>
</feature>
<feature type="chain" id="PRO_5000525374" description="Toxin TdNa10">
    <location>
        <begin position="21"/>
        <end position="81"/>
    </location>
</feature>
<feature type="domain" description="LCN-type CS-alpha/beta" evidence="2">
    <location>
        <begin position="21"/>
        <end position="81"/>
    </location>
</feature>
<feature type="disulfide bond" evidence="2">
    <location>
        <begin position="32"/>
        <end position="80"/>
    </location>
</feature>
<feature type="disulfide bond" evidence="2">
    <location>
        <begin position="36"/>
        <end position="57"/>
    </location>
</feature>
<feature type="disulfide bond" evidence="2">
    <location>
        <begin position="42"/>
        <end position="62"/>
    </location>
</feature>
<feature type="disulfide bond" evidence="2">
    <location>
        <begin position="46"/>
        <end position="64"/>
    </location>
</feature>
<reference key="1">
    <citation type="journal article" date="2009" name="Biochimie">
        <title>Molecular cloning and nucleotide sequence analysis of genes from a cDNA library of the scorpion Tityus discrepans.</title>
        <authorList>
            <person name="D'Suze G."/>
            <person name="Schwartz E.F."/>
            <person name="Garcia-Gomez B.I."/>
            <person name="Sevcik C."/>
            <person name="Possani L.D."/>
        </authorList>
    </citation>
    <scope>NUCLEOTIDE SEQUENCE [MRNA]</scope>
    <source>
        <tissue>Venom gland</tissue>
    </source>
</reference>
<reference key="2">
    <citation type="journal article" date="2012" name="PLoS ONE">
        <title>Identification and phylogenetic analysis of Tityus pachyurus and Tityus obscurus novel putative Na+-channel scorpion toxins.</title>
        <authorList>
            <person name="Guerrero-Vargas J.A."/>
            <person name="Mourao C.B."/>
            <person name="Quintero-Hernandez V."/>
            <person name="Possani L.D."/>
            <person name="Schwartz E.F."/>
        </authorList>
    </citation>
    <scope>NOMENCLATURE</scope>
</reference>
<proteinExistence type="evidence at transcript level"/>
<comment type="function">
    <text evidence="1">Alpha toxins bind voltage-independently at site-3 of sodium channels (Nav) and inhibit the inactivation of the activated channels, thereby blocking neuronal transmission. This toxin binds, in vitro, to sodium channels and inhibits the inactivation of the activated channels. Seems not toxic to mice, crickets and sweet-water shrimps (By similarity).</text>
</comment>
<comment type="subcellular location">
    <subcellularLocation>
        <location evidence="1">Secreted</location>
    </subcellularLocation>
</comment>
<comment type="tissue specificity">
    <text>Expressed by the venom gland.</text>
</comment>
<comment type="domain">
    <text evidence="3">Has the structural arrangement of an alpha-helix connected to antiparallel beta-sheets by disulfide bonds (CS-alpha/beta).</text>
</comment>
<comment type="similarity">
    <text evidence="3">Belongs to the long (4 C-C) scorpion toxin superfamily. Sodium channel inhibitor family. Beta subfamily.</text>
</comment>
<comment type="caution">
    <text evidence="3">This toxin sequence resembles the beta scorpion toxin class, although patch-clamp experiments shows the induction of supplementary slow inactivation of sodium channels, which means that it behaves like an alpha scorpion toxin.</text>
</comment>
<organism>
    <name type="scientific">Tityus discrepans</name>
    <name type="common">Venezuelan scorpion</name>
    <dbReference type="NCBI Taxonomy" id="57059"/>
    <lineage>
        <taxon>Eukaryota</taxon>
        <taxon>Metazoa</taxon>
        <taxon>Ecdysozoa</taxon>
        <taxon>Arthropoda</taxon>
        <taxon>Chelicerata</taxon>
        <taxon>Arachnida</taxon>
        <taxon>Scorpiones</taxon>
        <taxon>Buthida</taxon>
        <taxon>Buthoidea</taxon>
        <taxon>Buthidae</taxon>
        <taxon>Tityus</taxon>
    </lineage>
</organism>
<sequence length="81" mass="9107">MWTFAIVLAFLLIGLDEGEALDGYPLSKNNYCKIYCPNTEVCKDTCKRRAGATDGECRWDGCYCFNVAPDTKMYPGELPCH</sequence>
<protein>
    <recommendedName>
        <fullName>Toxin TdNa10</fullName>
    </recommendedName>
    <alternativeName>
        <fullName>T-alpha* NaTx7.2</fullName>
    </alternativeName>
</protein>
<keyword id="KW-1015">Disulfide bond</keyword>
<keyword id="KW-0872">Ion channel impairing toxin</keyword>
<keyword id="KW-0528">Neurotoxin</keyword>
<keyword id="KW-0964">Secreted</keyword>
<keyword id="KW-0732">Signal</keyword>
<keyword id="KW-0800">Toxin</keyword>
<keyword id="KW-0738">Voltage-gated sodium channel impairing toxin</keyword>
<evidence type="ECO:0000250" key="1"/>
<evidence type="ECO:0000255" key="2">
    <source>
        <dbReference type="PROSITE-ProRule" id="PRU01210"/>
    </source>
</evidence>
<evidence type="ECO:0000305" key="3"/>